<keyword id="KW-0058">Aromatic hydrocarbons catabolism</keyword>
<keyword id="KW-0223">Dioxygenase</keyword>
<keyword id="KW-0408">Iron</keyword>
<keyword id="KW-0560">Oxidoreductase</keyword>
<protein>
    <recommendedName>
        <fullName evidence="1">2,3-dihydroxyphenylpropionate/2,3-dihydroxicinnamic acid 1,2-dioxygenase</fullName>
        <ecNumber evidence="1">1.13.11.16</ecNumber>
    </recommendedName>
    <alternativeName>
        <fullName evidence="1">3-carboxyethylcatechol 2,3-dioxygenase</fullName>
    </alternativeName>
</protein>
<name>MHPB_ECOLU</name>
<sequence>MHAYLHCLSHSPLVGYVDPAQEVLDEVNGVIASARERIAAFSPELVVLFAPDHYNGFFYDVMPPFCLGVGATAIGDFGSAAGELPVPVELAEACAHAVMKSGIDLAVSYCMQVDHGFAQPLEFLLGGLDKVPVLPVFINGVATPLPGFQRTRMLGEAIGRFTSTLNKRVLFLGSGGLSHQPPVPELAKADAHMRDRLLGSGKDLPASERELRQQRVISAAEKFVEDQRTLHPLNPIWDNQFMTLLEQGRIQELDAVSNEELSAIAGKSTHEIKTWVAAFAAISAFGNWRSEGRYYRPIPEWIAGFGSLSARTEN</sequence>
<reference key="1">
    <citation type="journal article" date="2009" name="PLoS Genet.">
        <title>Organised genome dynamics in the Escherichia coli species results in highly diverse adaptive paths.</title>
        <authorList>
            <person name="Touchon M."/>
            <person name="Hoede C."/>
            <person name="Tenaillon O."/>
            <person name="Barbe V."/>
            <person name="Baeriswyl S."/>
            <person name="Bidet P."/>
            <person name="Bingen E."/>
            <person name="Bonacorsi S."/>
            <person name="Bouchier C."/>
            <person name="Bouvet O."/>
            <person name="Calteau A."/>
            <person name="Chiapello H."/>
            <person name="Clermont O."/>
            <person name="Cruveiller S."/>
            <person name="Danchin A."/>
            <person name="Diard M."/>
            <person name="Dossat C."/>
            <person name="Karoui M.E."/>
            <person name="Frapy E."/>
            <person name="Garry L."/>
            <person name="Ghigo J.M."/>
            <person name="Gilles A.M."/>
            <person name="Johnson J."/>
            <person name="Le Bouguenec C."/>
            <person name="Lescat M."/>
            <person name="Mangenot S."/>
            <person name="Martinez-Jehanne V."/>
            <person name="Matic I."/>
            <person name="Nassif X."/>
            <person name="Oztas S."/>
            <person name="Petit M.A."/>
            <person name="Pichon C."/>
            <person name="Rouy Z."/>
            <person name="Ruf C.S."/>
            <person name="Schneider D."/>
            <person name="Tourret J."/>
            <person name="Vacherie B."/>
            <person name="Vallenet D."/>
            <person name="Medigue C."/>
            <person name="Rocha E.P.C."/>
            <person name="Denamur E."/>
        </authorList>
    </citation>
    <scope>NUCLEOTIDE SEQUENCE [LARGE SCALE GENOMIC DNA]</scope>
    <source>
        <strain>UMN026 / ExPEC</strain>
    </source>
</reference>
<proteinExistence type="inferred from homology"/>
<feature type="chain" id="PRO_1000187006" description="2,3-dihydroxyphenylpropionate/2,3-dihydroxicinnamic acid 1,2-dioxygenase">
    <location>
        <begin position="1"/>
        <end position="314"/>
    </location>
</feature>
<feature type="active site" description="Proton donor" evidence="1">
    <location>
        <position position="115"/>
    </location>
</feature>
<feature type="active site" description="Proton acceptor" evidence="1">
    <location>
        <position position="179"/>
    </location>
</feature>
<comment type="function">
    <text evidence="1">Catalyzes the non-heme iron(II)-dependent oxidative cleavage of 2,3-dihydroxyphenylpropionic acid and 2,3-dihydroxicinnamic acid into 2-hydroxy-6-ketononadienedioate and 2-hydroxy-6-ketononatrienedioate, respectively.</text>
</comment>
<comment type="catalytic activity">
    <reaction evidence="1">
        <text>3-(2,3-dihydroxyphenyl)propanoate + O2 = (2Z,4E)-2-hydroxy-6-oxonona-2,4-dienedioate + H(+)</text>
        <dbReference type="Rhea" id="RHEA:23840"/>
        <dbReference type="ChEBI" id="CHEBI:15378"/>
        <dbReference type="ChEBI" id="CHEBI:15379"/>
        <dbReference type="ChEBI" id="CHEBI:46951"/>
        <dbReference type="ChEBI" id="CHEBI:66887"/>
        <dbReference type="EC" id="1.13.11.16"/>
    </reaction>
</comment>
<comment type="catalytic activity">
    <reaction evidence="1">
        <text>(2E)-3-(2,3-dihydroxyphenyl)prop-2-enoate + O2 = (2Z,4E,7E)-2-hydroxy-6-oxonona-2,4,7-trienedioate + H(+)</text>
        <dbReference type="Rhea" id="RHEA:25054"/>
        <dbReference type="ChEBI" id="CHEBI:15378"/>
        <dbReference type="ChEBI" id="CHEBI:15379"/>
        <dbReference type="ChEBI" id="CHEBI:58642"/>
        <dbReference type="ChEBI" id="CHEBI:66888"/>
        <dbReference type="EC" id="1.13.11.16"/>
    </reaction>
</comment>
<comment type="cofactor">
    <cofactor evidence="1">
        <name>Fe(2+)</name>
        <dbReference type="ChEBI" id="CHEBI:29033"/>
    </cofactor>
</comment>
<comment type="pathway">
    <text evidence="1">Aromatic compound metabolism; 3-phenylpropanoate degradation.</text>
</comment>
<comment type="subunit">
    <text evidence="1">Homotetramer.</text>
</comment>
<comment type="similarity">
    <text evidence="1">Belongs to the LigB/MhpB extradiol dioxygenase family.</text>
</comment>
<dbReference type="EC" id="1.13.11.16" evidence="1"/>
<dbReference type="EMBL" id="CU928163">
    <property type="protein sequence ID" value="CAR11606.1"/>
    <property type="molecule type" value="Genomic_DNA"/>
</dbReference>
<dbReference type="RefSeq" id="WP_000543457.1">
    <property type="nucleotide sequence ID" value="NC_011751.1"/>
</dbReference>
<dbReference type="RefSeq" id="YP_002411154.1">
    <property type="nucleotide sequence ID" value="NC_011751.1"/>
</dbReference>
<dbReference type="SMR" id="B7N8Q5"/>
<dbReference type="STRING" id="585056.ECUMN_0391"/>
<dbReference type="GeneID" id="93777107"/>
<dbReference type="KEGG" id="eum:ECUMN_0391"/>
<dbReference type="PATRIC" id="fig|585056.7.peg.589"/>
<dbReference type="HOGENOM" id="CLU_078149_0_0_6"/>
<dbReference type="UniPathway" id="UPA00714"/>
<dbReference type="Proteomes" id="UP000007097">
    <property type="component" value="Chromosome"/>
</dbReference>
<dbReference type="GO" id="GO:0047070">
    <property type="term" value="F:3-carboxyethylcatechol 2,3-dioxygenase activity"/>
    <property type="evidence" value="ECO:0007669"/>
    <property type="project" value="UniProtKB-UniRule"/>
</dbReference>
<dbReference type="GO" id="GO:0008198">
    <property type="term" value="F:ferrous iron binding"/>
    <property type="evidence" value="ECO:0007669"/>
    <property type="project" value="InterPro"/>
</dbReference>
<dbReference type="GO" id="GO:0019380">
    <property type="term" value="P:3-phenylpropionate catabolic process"/>
    <property type="evidence" value="ECO:0007669"/>
    <property type="project" value="UniProtKB-UniRule"/>
</dbReference>
<dbReference type="CDD" id="cd07365">
    <property type="entry name" value="MhpB_like"/>
    <property type="match status" value="1"/>
</dbReference>
<dbReference type="Gene3D" id="3.40.830.10">
    <property type="entry name" value="LigB-like"/>
    <property type="match status" value="1"/>
</dbReference>
<dbReference type="HAMAP" id="MF_01653">
    <property type="entry name" value="MhpB"/>
    <property type="match status" value="1"/>
</dbReference>
<dbReference type="InterPro" id="IPR023789">
    <property type="entry name" value="DHPP/DHXA_dioxygenase"/>
</dbReference>
<dbReference type="InterPro" id="IPR004183">
    <property type="entry name" value="Xdiol_dOase_suB"/>
</dbReference>
<dbReference type="NCBIfam" id="NF009907">
    <property type="entry name" value="PRK13370.1-1"/>
    <property type="match status" value="1"/>
</dbReference>
<dbReference type="NCBIfam" id="NF009910">
    <property type="entry name" value="PRK13370.1-4"/>
    <property type="match status" value="1"/>
</dbReference>
<dbReference type="Pfam" id="PF02900">
    <property type="entry name" value="LigB"/>
    <property type="match status" value="1"/>
</dbReference>
<dbReference type="SUPFAM" id="SSF53213">
    <property type="entry name" value="LigB-like"/>
    <property type="match status" value="1"/>
</dbReference>
<gene>
    <name evidence="1" type="primary">mhpB</name>
    <name type="ordered locus">ECUMN_0391</name>
</gene>
<evidence type="ECO:0000255" key="1">
    <source>
        <dbReference type="HAMAP-Rule" id="MF_01653"/>
    </source>
</evidence>
<accession>B7N8Q5</accession>
<organism>
    <name type="scientific">Escherichia coli O17:K52:H18 (strain UMN026 / ExPEC)</name>
    <dbReference type="NCBI Taxonomy" id="585056"/>
    <lineage>
        <taxon>Bacteria</taxon>
        <taxon>Pseudomonadati</taxon>
        <taxon>Pseudomonadota</taxon>
        <taxon>Gammaproteobacteria</taxon>
        <taxon>Enterobacterales</taxon>
        <taxon>Enterobacteriaceae</taxon>
        <taxon>Escherichia</taxon>
    </lineage>
</organism>